<name>RPOC_CLOTE</name>
<gene>
    <name evidence="1" type="primary">rpoC</name>
    <name type="ordered locus">CTC_02608</name>
</gene>
<evidence type="ECO:0000255" key="1">
    <source>
        <dbReference type="HAMAP-Rule" id="MF_01322"/>
    </source>
</evidence>
<evidence type="ECO:0000305" key="2"/>
<keyword id="KW-0240">DNA-directed RNA polymerase</keyword>
<keyword id="KW-0460">Magnesium</keyword>
<keyword id="KW-0479">Metal-binding</keyword>
<keyword id="KW-0548">Nucleotidyltransferase</keyword>
<keyword id="KW-1185">Reference proteome</keyword>
<keyword id="KW-0804">Transcription</keyword>
<keyword id="KW-0808">Transferase</keyword>
<keyword id="KW-0862">Zinc</keyword>
<feature type="chain" id="PRO_0000067734" description="DNA-directed RNA polymerase subunit beta'">
    <location>
        <begin position="1"/>
        <end position="1135"/>
    </location>
</feature>
<feature type="binding site" evidence="1">
    <location>
        <position position="60"/>
    </location>
    <ligand>
        <name>Zn(2+)</name>
        <dbReference type="ChEBI" id="CHEBI:29105"/>
        <label>1</label>
    </ligand>
</feature>
<feature type="binding site" evidence="1">
    <location>
        <position position="62"/>
    </location>
    <ligand>
        <name>Zn(2+)</name>
        <dbReference type="ChEBI" id="CHEBI:29105"/>
        <label>1</label>
    </ligand>
</feature>
<feature type="binding site" evidence="1">
    <location>
        <position position="75"/>
    </location>
    <ligand>
        <name>Zn(2+)</name>
        <dbReference type="ChEBI" id="CHEBI:29105"/>
        <label>1</label>
    </ligand>
</feature>
<feature type="binding site" evidence="1">
    <location>
        <position position="78"/>
    </location>
    <ligand>
        <name>Zn(2+)</name>
        <dbReference type="ChEBI" id="CHEBI:29105"/>
        <label>1</label>
    </ligand>
</feature>
<feature type="binding site" evidence="1">
    <location>
        <position position="450"/>
    </location>
    <ligand>
        <name>Mg(2+)</name>
        <dbReference type="ChEBI" id="CHEBI:18420"/>
    </ligand>
</feature>
<feature type="binding site" evidence="1">
    <location>
        <position position="452"/>
    </location>
    <ligand>
        <name>Mg(2+)</name>
        <dbReference type="ChEBI" id="CHEBI:18420"/>
    </ligand>
</feature>
<feature type="binding site" evidence="1">
    <location>
        <position position="454"/>
    </location>
    <ligand>
        <name>Mg(2+)</name>
        <dbReference type="ChEBI" id="CHEBI:18420"/>
    </ligand>
</feature>
<feature type="binding site" evidence="1">
    <location>
        <position position="795"/>
    </location>
    <ligand>
        <name>Zn(2+)</name>
        <dbReference type="ChEBI" id="CHEBI:29105"/>
        <label>2</label>
    </ligand>
</feature>
<feature type="binding site" evidence="1">
    <location>
        <position position="869"/>
    </location>
    <ligand>
        <name>Zn(2+)</name>
        <dbReference type="ChEBI" id="CHEBI:29105"/>
        <label>2</label>
    </ligand>
</feature>
<feature type="binding site" evidence="1">
    <location>
        <position position="876"/>
    </location>
    <ligand>
        <name>Zn(2+)</name>
        <dbReference type="ChEBI" id="CHEBI:29105"/>
        <label>2</label>
    </ligand>
</feature>
<feature type="binding site" evidence="1">
    <location>
        <position position="879"/>
    </location>
    <ligand>
        <name>Zn(2+)</name>
        <dbReference type="ChEBI" id="CHEBI:29105"/>
        <label>2</label>
    </ligand>
</feature>
<comment type="function">
    <text evidence="1">DNA-dependent RNA polymerase catalyzes the transcription of DNA into RNA using the four ribonucleoside triphosphates as substrates.</text>
</comment>
<comment type="catalytic activity">
    <reaction evidence="1">
        <text>RNA(n) + a ribonucleoside 5'-triphosphate = RNA(n+1) + diphosphate</text>
        <dbReference type="Rhea" id="RHEA:21248"/>
        <dbReference type="Rhea" id="RHEA-COMP:14527"/>
        <dbReference type="Rhea" id="RHEA-COMP:17342"/>
        <dbReference type="ChEBI" id="CHEBI:33019"/>
        <dbReference type="ChEBI" id="CHEBI:61557"/>
        <dbReference type="ChEBI" id="CHEBI:140395"/>
        <dbReference type="EC" id="2.7.7.6"/>
    </reaction>
</comment>
<comment type="cofactor">
    <cofactor evidence="1">
        <name>Mg(2+)</name>
        <dbReference type="ChEBI" id="CHEBI:18420"/>
    </cofactor>
    <text evidence="1">Binds 1 Mg(2+) ion per subunit.</text>
</comment>
<comment type="cofactor">
    <cofactor evidence="1">
        <name>Zn(2+)</name>
        <dbReference type="ChEBI" id="CHEBI:29105"/>
    </cofactor>
    <text evidence="1">Binds 2 Zn(2+) ions per subunit.</text>
</comment>
<comment type="subunit">
    <text evidence="1">The RNAP catalytic core consists of 2 alpha, 1 beta, 1 beta' and 1 omega subunit. When a sigma factor is associated with the core the holoenzyme is formed, which can initiate transcription.</text>
</comment>
<comment type="similarity">
    <text evidence="1">Belongs to the RNA polymerase beta' chain family.</text>
</comment>
<comment type="sequence caution" evidence="2">
    <conflict type="erroneous initiation">
        <sequence resource="EMBL-CDS" id="AAO37061"/>
    </conflict>
    <text>Extended N-terminus.</text>
</comment>
<protein>
    <recommendedName>
        <fullName evidence="1">DNA-directed RNA polymerase subunit beta'</fullName>
        <shortName evidence="1">RNAP subunit beta'</shortName>
        <ecNumber evidence="1">2.7.7.6</ecNumber>
    </recommendedName>
    <alternativeName>
        <fullName evidence="1">RNA polymerase subunit beta'</fullName>
    </alternativeName>
    <alternativeName>
        <fullName evidence="1">Transcriptase subunit beta'</fullName>
    </alternativeName>
</protein>
<proteinExistence type="inferred from homology"/>
<organism>
    <name type="scientific">Clostridium tetani (strain Massachusetts / E88)</name>
    <dbReference type="NCBI Taxonomy" id="212717"/>
    <lineage>
        <taxon>Bacteria</taxon>
        <taxon>Bacillati</taxon>
        <taxon>Bacillota</taxon>
        <taxon>Clostridia</taxon>
        <taxon>Eubacteriales</taxon>
        <taxon>Clostridiaceae</taxon>
        <taxon>Clostridium</taxon>
    </lineage>
</organism>
<dbReference type="EC" id="2.7.7.6" evidence="1"/>
<dbReference type="EMBL" id="AE015927">
    <property type="protein sequence ID" value="AAO37061.1"/>
    <property type="status" value="ALT_INIT"/>
    <property type="molecule type" value="Genomic_DNA"/>
</dbReference>
<dbReference type="SMR" id="Q890N5"/>
<dbReference type="STRING" id="212717.CTC_02608"/>
<dbReference type="KEGG" id="ctc:CTC_02608"/>
<dbReference type="HOGENOM" id="CLU_000524_3_1_9"/>
<dbReference type="OrthoDB" id="9815296at2"/>
<dbReference type="Proteomes" id="UP000001412">
    <property type="component" value="Chromosome"/>
</dbReference>
<dbReference type="GO" id="GO:0000428">
    <property type="term" value="C:DNA-directed RNA polymerase complex"/>
    <property type="evidence" value="ECO:0007669"/>
    <property type="project" value="UniProtKB-KW"/>
</dbReference>
<dbReference type="GO" id="GO:0003677">
    <property type="term" value="F:DNA binding"/>
    <property type="evidence" value="ECO:0007669"/>
    <property type="project" value="UniProtKB-UniRule"/>
</dbReference>
<dbReference type="GO" id="GO:0003899">
    <property type="term" value="F:DNA-directed RNA polymerase activity"/>
    <property type="evidence" value="ECO:0007669"/>
    <property type="project" value="UniProtKB-UniRule"/>
</dbReference>
<dbReference type="GO" id="GO:0000287">
    <property type="term" value="F:magnesium ion binding"/>
    <property type="evidence" value="ECO:0007669"/>
    <property type="project" value="UniProtKB-UniRule"/>
</dbReference>
<dbReference type="GO" id="GO:0008270">
    <property type="term" value="F:zinc ion binding"/>
    <property type="evidence" value="ECO:0007669"/>
    <property type="project" value="UniProtKB-UniRule"/>
</dbReference>
<dbReference type="GO" id="GO:0006351">
    <property type="term" value="P:DNA-templated transcription"/>
    <property type="evidence" value="ECO:0007669"/>
    <property type="project" value="UniProtKB-UniRule"/>
</dbReference>
<dbReference type="CDD" id="cd02655">
    <property type="entry name" value="RNAP_beta'_C"/>
    <property type="match status" value="1"/>
</dbReference>
<dbReference type="CDD" id="cd01609">
    <property type="entry name" value="RNAP_beta'_N"/>
    <property type="match status" value="1"/>
</dbReference>
<dbReference type="FunFam" id="1.10.40.90:FF:000001">
    <property type="entry name" value="DNA-directed RNA polymerase subunit beta"/>
    <property type="match status" value="1"/>
</dbReference>
<dbReference type="FunFam" id="4.10.860.120:FF:000001">
    <property type="entry name" value="DNA-directed RNA polymerase subunit beta"/>
    <property type="match status" value="1"/>
</dbReference>
<dbReference type="Gene3D" id="1.10.132.30">
    <property type="match status" value="1"/>
</dbReference>
<dbReference type="Gene3D" id="1.10.150.390">
    <property type="match status" value="1"/>
</dbReference>
<dbReference type="Gene3D" id="1.10.1790.20">
    <property type="match status" value="1"/>
</dbReference>
<dbReference type="Gene3D" id="1.10.40.90">
    <property type="match status" value="1"/>
</dbReference>
<dbReference type="Gene3D" id="2.40.40.20">
    <property type="match status" value="1"/>
</dbReference>
<dbReference type="Gene3D" id="2.40.50.100">
    <property type="match status" value="1"/>
</dbReference>
<dbReference type="Gene3D" id="4.10.860.120">
    <property type="entry name" value="RNA polymerase II, clamp domain"/>
    <property type="match status" value="1"/>
</dbReference>
<dbReference type="Gene3D" id="1.10.274.100">
    <property type="entry name" value="RNA polymerase Rpb1, domain 3"/>
    <property type="match status" value="2"/>
</dbReference>
<dbReference type="HAMAP" id="MF_01322">
    <property type="entry name" value="RNApol_bact_RpoC"/>
    <property type="match status" value="1"/>
</dbReference>
<dbReference type="InterPro" id="IPR045867">
    <property type="entry name" value="DNA-dir_RpoC_beta_prime"/>
</dbReference>
<dbReference type="InterPro" id="IPR012754">
    <property type="entry name" value="DNA-dir_RpoC_beta_prime_bact"/>
</dbReference>
<dbReference type="InterPro" id="IPR000722">
    <property type="entry name" value="RNA_pol_asu"/>
</dbReference>
<dbReference type="InterPro" id="IPR006592">
    <property type="entry name" value="RNA_pol_N"/>
</dbReference>
<dbReference type="InterPro" id="IPR007080">
    <property type="entry name" value="RNA_pol_Rpb1_1"/>
</dbReference>
<dbReference type="InterPro" id="IPR007066">
    <property type="entry name" value="RNA_pol_Rpb1_3"/>
</dbReference>
<dbReference type="InterPro" id="IPR042102">
    <property type="entry name" value="RNA_pol_Rpb1_3_sf"/>
</dbReference>
<dbReference type="InterPro" id="IPR007083">
    <property type="entry name" value="RNA_pol_Rpb1_4"/>
</dbReference>
<dbReference type="InterPro" id="IPR007081">
    <property type="entry name" value="RNA_pol_Rpb1_5"/>
</dbReference>
<dbReference type="InterPro" id="IPR044893">
    <property type="entry name" value="RNA_pol_Rpb1_clamp_domain"/>
</dbReference>
<dbReference type="InterPro" id="IPR038120">
    <property type="entry name" value="Rpb1_funnel_sf"/>
</dbReference>
<dbReference type="NCBIfam" id="TIGR02386">
    <property type="entry name" value="rpoC_TIGR"/>
    <property type="match status" value="1"/>
</dbReference>
<dbReference type="PANTHER" id="PTHR19376">
    <property type="entry name" value="DNA-DIRECTED RNA POLYMERASE"/>
    <property type="match status" value="1"/>
</dbReference>
<dbReference type="PANTHER" id="PTHR19376:SF54">
    <property type="entry name" value="DNA-DIRECTED RNA POLYMERASE SUBUNIT BETA"/>
    <property type="match status" value="1"/>
</dbReference>
<dbReference type="Pfam" id="PF04997">
    <property type="entry name" value="RNA_pol_Rpb1_1"/>
    <property type="match status" value="1"/>
</dbReference>
<dbReference type="Pfam" id="PF00623">
    <property type="entry name" value="RNA_pol_Rpb1_2"/>
    <property type="match status" value="1"/>
</dbReference>
<dbReference type="Pfam" id="PF04983">
    <property type="entry name" value="RNA_pol_Rpb1_3"/>
    <property type="match status" value="1"/>
</dbReference>
<dbReference type="Pfam" id="PF05000">
    <property type="entry name" value="RNA_pol_Rpb1_4"/>
    <property type="match status" value="1"/>
</dbReference>
<dbReference type="Pfam" id="PF04998">
    <property type="entry name" value="RNA_pol_Rpb1_5"/>
    <property type="match status" value="1"/>
</dbReference>
<dbReference type="SMART" id="SM00663">
    <property type="entry name" value="RPOLA_N"/>
    <property type="match status" value="1"/>
</dbReference>
<dbReference type="SUPFAM" id="SSF64484">
    <property type="entry name" value="beta and beta-prime subunits of DNA dependent RNA-polymerase"/>
    <property type="match status" value="1"/>
</dbReference>
<reference key="1">
    <citation type="journal article" date="2003" name="Proc. Natl. Acad. Sci. U.S.A.">
        <title>The genome sequence of Clostridium tetani, the causative agent of tetanus disease.</title>
        <authorList>
            <person name="Brueggemann H."/>
            <person name="Baeumer S."/>
            <person name="Fricke W.F."/>
            <person name="Wiezer A."/>
            <person name="Liesegang H."/>
            <person name="Decker I."/>
            <person name="Herzberg C."/>
            <person name="Martinez-Arias R."/>
            <person name="Merkl R."/>
            <person name="Henne A."/>
            <person name="Gottschalk G."/>
        </authorList>
    </citation>
    <scope>NUCLEOTIDE SEQUENCE [LARGE SCALE GENOMIC DNA]</scope>
    <source>
        <strain>Massachusetts / E88</strain>
    </source>
</reference>
<accession>Q890N5</accession>
<sequence>MFELNNFDALQIGLASPEKIREWSRGEVKKPETINYRTLKPERDGLFCERIFGPTKDWECHCGKYKRVRYKGIVCDRCGVEVTKSKVRRERMGHIELAAPVSHIWYFKGIPSRMGLMLDMSPRSLEKVLYFASYIVIDPKETPLLKKQLLNEKEYREAIENYGEEGFVAGMGAESVQKLLEEIDLNQVSKELKEALKTSTGQKKIRLIRRLEAVESFRKSSNRPDWMIIDVIPVIPPDLRPMVQLDGGRFATSDLNDLYRRVINRNNRLKKLLDLGAPDIIVRNEKRMLQEAVDALIDNGRRGRPVTGPGNRPLKSLSDMLKGKQGRFRQNLLGKRVDYSGRSVIVVGPELKMYQCGLPKEMALELFKPFVMKKLVQGGLSHNIKSAKRMVERVQSEVWDVLEEVISDHPVLLNRAPTLHRLGIQAFQPVLVEGRAIKLHPLVCTAYNADFDGDQMAVHLPLSVEAQAEARFLMLAAHNILKPSDGKPVCVPTQDMVLGSYYLTLDKENAIGEGRIFSSPEEAIMAYQIGDIDIHAHIKVRISKEVDGEEVCGIIDCTPGKLIFNESIPQDLGFVDRSVPGNEVKLEVDFLINKSSLGKLINKCYMKHGPTKTSIMLDKIKEKGYHYSTIGAITVSTSDMVVPEAKKRLLAETDVEVNKIDKMYRRGFISEDERYERVIEKWTKTTDLVADELMKNLDRFNPIFMMADSGARGSKSQIKQLAGMRGLMANPSGKIIELPIRASFREGLDVSEYFISTHGARKGNADTALKTADSGYLTRRLVDVSQDVIVREEDCGSKEGFEISEIREGNEIIEPLSERLTGRYSAEDIIDPNTGEILVKKEEYIDGEKAEEVEKSGVKKIKIRSVFTCKSKHGVCAKCYGMNMATAEKINIGESVGIIAAQSIGEPGTQLTMRTFHTGGVAGSDITQGLPRVEELFEARKPKGLAIVSEINGTIRIDETKKKRTVVVIGETEEISYDIPFGSRLKVSNGDVISAGDEITEGSVNPHDVLRIKGPNGVKNYLLSEVQKVYRLQGVDINDKHLEVVVRQMTRKIKIEESGDTEFLPGTMVDIFDFQEENAKAEEEGKETAKGRITLLGITKAALATDSFLSSASFQETTRVLTDAAIKGKVDPLLG</sequence>